<keyword id="KW-1185">Reference proteome</keyword>
<keyword id="KW-0687">Ribonucleoprotein</keyword>
<keyword id="KW-0689">Ribosomal protein</keyword>
<keyword id="KW-0694">RNA-binding</keyword>
<keyword id="KW-0699">rRNA-binding</keyword>
<feature type="chain" id="PRO_0000243688" description="Large ribosomal subunit protein bL20">
    <location>
        <begin position="1"/>
        <end position="118"/>
    </location>
</feature>
<proteinExistence type="inferred from homology"/>
<dbReference type="EMBL" id="CP000155">
    <property type="protein sequence ID" value="ABC31279.1"/>
    <property type="molecule type" value="Genomic_DNA"/>
</dbReference>
<dbReference type="RefSeq" id="WP_011398344.1">
    <property type="nucleotide sequence ID" value="NC_007645.1"/>
</dbReference>
<dbReference type="SMR" id="Q2SDJ5"/>
<dbReference type="STRING" id="349521.HCH_04576"/>
<dbReference type="KEGG" id="hch:HCH_04576"/>
<dbReference type="eggNOG" id="COG0292">
    <property type="taxonomic scope" value="Bacteria"/>
</dbReference>
<dbReference type="HOGENOM" id="CLU_123265_0_1_6"/>
<dbReference type="OrthoDB" id="9808966at2"/>
<dbReference type="Proteomes" id="UP000000238">
    <property type="component" value="Chromosome"/>
</dbReference>
<dbReference type="GO" id="GO:1990904">
    <property type="term" value="C:ribonucleoprotein complex"/>
    <property type="evidence" value="ECO:0007669"/>
    <property type="project" value="UniProtKB-KW"/>
</dbReference>
<dbReference type="GO" id="GO:0005840">
    <property type="term" value="C:ribosome"/>
    <property type="evidence" value="ECO:0007669"/>
    <property type="project" value="UniProtKB-KW"/>
</dbReference>
<dbReference type="GO" id="GO:0019843">
    <property type="term" value="F:rRNA binding"/>
    <property type="evidence" value="ECO:0007669"/>
    <property type="project" value="UniProtKB-UniRule"/>
</dbReference>
<dbReference type="GO" id="GO:0003735">
    <property type="term" value="F:structural constituent of ribosome"/>
    <property type="evidence" value="ECO:0007669"/>
    <property type="project" value="InterPro"/>
</dbReference>
<dbReference type="GO" id="GO:0000027">
    <property type="term" value="P:ribosomal large subunit assembly"/>
    <property type="evidence" value="ECO:0007669"/>
    <property type="project" value="UniProtKB-UniRule"/>
</dbReference>
<dbReference type="GO" id="GO:0006412">
    <property type="term" value="P:translation"/>
    <property type="evidence" value="ECO:0007669"/>
    <property type="project" value="InterPro"/>
</dbReference>
<dbReference type="CDD" id="cd07026">
    <property type="entry name" value="Ribosomal_L20"/>
    <property type="match status" value="1"/>
</dbReference>
<dbReference type="FunFam" id="1.10.1900.20:FF:000001">
    <property type="entry name" value="50S ribosomal protein L20"/>
    <property type="match status" value="1"/>
</dbReference>
<dbReference type="Gene3D" id="6.10.160.10">
    <property type="match status" value="1"/>
</dbReference>
<dbReference type="Gene3D" id="1.10.1900.20">
    <property type="entry name" value="Ribosomal protein L20"/>
    <property type="match status" value="1"/>
</dbReference>
<dbReference type="HAMAP" id="MF_00382">
    <property type="entry name" value="Ribosomal_bL20"/>
    <property type="match status" value="1"/>
</dbReference>
<dbReference type="InterPro" id="IPR005813">
    <property type="entry name" value="Ribosomal_bL20"/>
</dbReference>
<dbReference type="InterPro" id="IPR049946">
    <property type="entry name" value="RIBOSOMAL_L20_CS"/>
</dbReference>
<dbReference type="InterPro" id="IPR035566">
    <property type="entry name" value="Ribosomal_protein_bL20_C"/>
</dbReference>
<dbReference type="NCBIfam" id="TIGR01032">
    <property type="entry name" value="rplT_bact"/>
    <property type="match status" value="1"/>
</dbReference>
<dbReference type="PANTHER" id="PTHR10986">
    <property type="entry name" value="39S RIBOSOMAL PROTEIN L20"/>
    <property type="match status" value="1"/>
</dbReference>
<dbReference type="Pfam" id="PF00453">
    <property type="entry name" value="Ribosomal_L20"/>
    <property type="match status" value="1"/>
</dbReference>
<dbReference type="PRINTS" id="PR00062">
    <property type="entry name" value="RIBOSOMALL20"/>
</dbReference>
<dbReference type="SUPFAM" id="SSF74731">
    <property type="entry name" value="Ribosomal protein L20"/>
    <property type="match status" value="1"/>
</dbReference>
<dbReference type="PROSITE" id="PS00937">
    <property type="entry name" value="RIBOSOMAL_L20"/>
    <property type="match status" value="1"/>
</dbReference>
<protein>
    <recommendedName>
        <fullName evidence="1">Large ribosomal subunit protein bL20</fullName>
    </recommendedName>
    <alternativeName>
        <fullName evidence="2">50S ribosomal protein L20</fullName>
    </alternativeName>
</protein>
<gene>
    <name evidence="1" type="primary">rplT</name>
    <name type="ordered locus">HCH_04576</name>
</gene>
<accession>Q2SDJ5</accession>
<evidence type="ECO:0000255" key="1">
    <source>
        <dbReference type="HAMAP-Rule" id="MF_00382"/>
    </source>
</evidence>
<evidence type="ECO:0000305" key="2"/>
<comment type="function">
    <text evidence="1">Binds directly to 23S ribosomal RNA and is necessary for the in vitro assembly process of the 50S ribosomal subunit. It is not involved in the protein synthesizing functions of that subunit.</text>
</comment>
<comment type="similarity">
    <text evidence="1">Belongs to the bacterial ribosomal protein bL20 family.</text>
</comment>
<reference key="1">
    <citation type="journal article" date="2005" name="Nucleic Acids Res.">
        <title>Genomic blueprint of Hahella chejuensis, a marine microbe producing an algicidal agent.</title>
        <authorList>
            <person name="Jeong H."/>
            <person name="Yim J.H."/>
            <person name="Lee C."/>
            <person name="Choi S.-H."/>
            <person name="Park Y.K."/>
            <person name="Yoon S.H."/>
            <person name="Hur C.-G."/>
            <person name="Kang H.-Y."/>
            <person name="Kim D."/>
            <person name="Lee H.H."/>
            <person name="Park K.H."/>
            <person name="Park S.-H."/>
            <person name="Park H.-S."/>
            <person name="Lee H.K."/>
            <person name="Oh T.K."/>
            <person name="Kim J.F."/>
        </authorList>
    </citation>
    <scope>NUCLEOTIDE SEQUENCE [LARGE SCALE GENOMIC DNA]</scope>
    <source>
        <strain>KCTC 2396</strain>
    </source>
</reference>
<sequence>MPRVKRGVTARRRHKKVLNQAKGYYGARSRVFRVAKQAVIKAGQYAYRDRRQRKRQFRALWIARINAGARDNGLSYSRLIAGLKRANVEIDRKVLADLAMNEKAAFAAVVQKAKEALA</sequence>
<name>RL20_HAHCH</name>
<organism>
    <name type="scientific">Hahella chejuensis (strain KCTC 2396)</name>
    <dbReference type="NCBI Taxonomy" id="349521"/>
    <lineage>
        <taxon>Bacteria</taxon>
        <taxon>Pseudomonadati</taxon>
        <taxon>Pseudomonadota</taxon>
        <taxon>Gammaproteobacteria</taxon>
        <taxon>Oceanospirillales</taxon>
        <taxon>Hahellaceae</taxon>
        <taxon>Hahella</taxon>
    </lineage>
</organism>